<protein>
    <recommendedName>
        <fullName evidence="5">L-aspartate oxidase 2-b, chloroplastic</fullName>
        <ecNumber evidence="2">1.4.3.16</ecNumber>
    </recommendedName>
</protein>
<evidence type="ECO:0000250" key="1">
    <source>
        <dbReference type="UniProtKB" id="P10902"/>
    </source>
</evidence>
<evidence type="ECO:0000250" key="2">
    <source>
        <dbReference type="UniProtKB" id="Q94AY1"/>
    </source>
</evidence>
<evidence type="ECO:0000255" key="3"/>
<evidence type="ECO:0000269" key="4">
    <source>
    </source>
</evidence>
<evidence type="ECO:0000303" key="5">
    <source>
    </source>
</evidence>
<evidence type="ECO:0000305" key="6"/>
<evidence type="ECO:0000312" key="7">
    <source>
        <dbReference type="RefSeq" id="XP_016489183.1"/>
    </source>
</evidence>
<name>AO2B_TOBAC</name>
<reference key="1">
    <citation type="journal article" date="2014" name="Nat. Commun.">
        <title>The tobacco genome sequence and its comparison with those of tomato and potato.</title>
        <authorList>
            <person name="Sierro N."/>
            <person name="Battey J.N."/>
            <person name="Ouadi S."/>
            <person name="Bakaher N."/>
            <person name="Bovet L."/>
            <person name="Willig A."/>
            <person name="Goepfert S."/>
            <person name="Peitsch M.C."/>
            <person name="Ivanov N.V."/>
        </authorList>
    </citation>
    <scope>NUCLEOTIDE SEQUENCE [LARGE SCALE GENOMIC DNA]</scope>
    <source>
        <strain>cv. TN90</strain>
    </source>
</reference>
<reference key="2">
    <citation type="submission" date="2011-01" db="EMBL/GenBank/DDBJ databases">
        <title>A comprehensive survey of the N. tabacum transcriptome.</title>
        <authorList>
            <person name="Coates S.A."/>
            <person name="Dorlhac de Borne F."/>
            <person name="Ross J."/>
            <person name="Verrier J.L."/>
            <person name="Ward M."/>
            <person name="Delon R."/>
        </authorList>
    </citation>
    <scope>NUCLEOTIDE SEQUENCE [LARGE SCALE MRNA] OF 517-648</scope>
    <source>
        <strain>cv. K326</strain>
        <tissue>Root</tissue>
    </source>
</reference>
<reference key="3">
    <citation type="journal article" date="2013" name="Phytochemistry">
        <title>Molecular genetics of alkaloid biosynthesis in Nicotiana tabacum.</title>
        <authorList>
            <person name="Dewey R.E."/>
            <person name="Xie J."/>
        </authorList>
    </citation>
    <scope>REVIEW ON ALKALOID BIOSYNTHESIS IN NICOTIANA TABACUM</scope>
</reference>
<reference key="4">
    <citation type="journal article" date="2015" name="Mol. Genet. Genomics">
        <title>Current status and prospects for the study of Nicotiana genomics, genetics, and nicotine biosynthesis genes.</title>
        <authorList>
            <person name="Wang X."/>
            <person name="Bennetzen J.L."/>
        </authorList>
    </citation>
    <scope>REVIEW ON NICOTINE BIOSYNTHESIS</scope>
</reference>
<reference key="5">
    <citation type="journal article" date="2020" name="Planta">
        <title>Genetic attenuation of alkaloids and nicotine content in tobacco (Nicotiana tabacum).</title>
        <authorList>
            <person name="Hidalgo Martinez D."/>
            <person name="Payyavula R.S."/>
            <person name="Kudithipudi C."/>
            <person name="Shen Y."/>
            <person name="Xu D."/>
            <person name="Warek U."/>
            <person name="Strickland J.A."/>
            <person name="Melis A."/>
        </authorList>
    </citation>
    <scope>FUNCTION</scope>
    <scope>DISRUPTION PHENOTYPE</scope>
    <scope>PATHWAY</scope>
    <source>
        <strain>cv. K326-ALCS3</strain>
    </source>
</reference>
<comment type="function">
    <text evidence="2 4">Involved in the biosynthesis of pyridine alkaloid natural products, leading mainly to the production of anabasine, anatabine, nicotine and nornicotine, effective deterrents against herbivores with antiparasitic and pesticide properties (neurotoxins); nornicotine serves as the precursor in the synthesis of the carcinogen compound N'-nitrosonornicotine (NNN) (PubMed:32242247). Catalyzes the oxidation of L-aspartate to iminoaspartate (By similarity).</text>
</comment>
<comment type="catalytic activity">
    <reaction evidence="2">
        <text>L-aspartate + O2 = iminosuccinate + H2O2</text>
        <dbReference type="Rhea" id="RHEA:25876"/>
        <dbReference type="ChEBI" id="CHEBI:15379"/>
        <dbReference type="ChEBI" id="CHEBI:16240"/>
        <dbReference type="ChEBI" id="CHEBI:29991"/>
        <dbReference type="ChEBI" id="CHEBI:77875"/>
        <dbReference type="EC" id="1.4.3.16"/>
    </reaction>
</comment>
<comment type="cofactor">
    <cofactor evidence="1">
        <name>FAD</name>
        <dbReference type="ChEBI" id="CHEBI:57692"/>
    </cofactor>
    <text evidence="1">Binds 1 FAD per subunit.</text>
</comment>
<comment type="pathway">
    <text evidence="4">Alkaloid biosynthesis; nicotine biosynthesis.</text>
</comment>
<comment type="pathway">
    <text evidence="2">Cofactor biosynthesis; NAD(+) biosynthesis; iminoaspartate from L-aspartate (oxidase route): step 1/1.</text>
</comment>
<comment type="subcellular location">
    <subcellularLocation>
        <location evidence="3">Plastid</location>
        <location evidence="3">Chloroplast</location>
    </subcellularLocation>
</comment>
<comment type="disruption phenotype">
    <text evidence="4">Reduced alkaloids and nicotin levels associated with a lower putrescine production (PubMed:32242247). Occasionally, an early senescence and a lower viability of the older leaves is observed (PubMed:32242247).</text>
</comment>
<comment type="similarity">
    <text evidence="6">Belongs to the FAD-dependent oxidoreductase 2 family. NadB subfamily.</text>
</comment>
<feature type="transit peptide" description="Chloroplast" evidence="3">
    <location>
        <begin position="1"/>
        <end status="unknown"/>
    </location>
</feature>
<feature type="chain" id="PRO_0000455774" description="L-aspartate oxidase 2-b, chloroplastic">
    <location>
        <begin status="unknown"/>
        <end position="648"/>
    </location>
</feature>
<feature type="active site" description="Proton donor/acceptor" evidence="1">
    <location>
        <position position="373"/>
    </location>
</feature>
<feature type="binding site" evidence="1">
    <location>
        <begin position="98"/>
        <end position="101"/>
    </location>
    <ligand>
        <name>FAD</name>
        <dbReference type="ChEBI" id="CHEBI:57692"/>
    </ligand>
</feature>
<feature type="binding site" evidence="1">
    <location>
        <position position="120"/>
    </location>
    <ligand>
        <name>FAD</name>
        <dbReference type="ChEBI" id="CHEBI:57692"/>
    </ligand>
</feature>
<feature type="binding site" evidence="1">
    <location>
        <begin position="127"/>
        <end position="134"/>
    </location>
    <ligand>
        <name>FAD</name>
        <dbReference type="ChEBI" id="CHEBI:57692"/>
    </ligand>
</feature>
<feature type="binding site" evidence="1">
    <location>
        <position position="298"/>
    </location>
    <ligand>
        <name>FAD</name>
        <dbReference type="ChEBI" id="CHEBI:57692"/>
    </ligand>
</feature>
<feature type="binding site" evidence="1">
    <location>
        <position position="458"/>
    </location>
    <ligand>
        <name>FAD</name>
        <dbReference type="ChEBI" id="CHEBI:57692"/>
    </ligand>
</feature>
<feature type="binding site" evidence="1">
    <location>
        <begin position="474"/>
        <end position="475"/>
    </location>
    <ligand>
        <name>FAD</name>
        <dbReference type="ChEBI" id="CHEBI:57692"/>
    </ligand>
</feature>
<feature type="site" description="Important in orienting the L-aspartate substrate" evidence="1">
    <location>
        <position position="199"/>
    </location>
</feature>
<feature type="sequence conflict" description="In Ref. 2; DW001381." evidence="6" ref="2">
    <original>C</original>
    <variation>R</variation>
    <location>
        <position position="525"/>
    </location>
</feature>
<feature type="sequence conflict" description="In Ref. 2; DW001381." evidence="6" ref="2">
    <original>N</original>
    <variation>T</variation>
    <location>
        <position position="548"/>
    </location>
</feature>
<feature type="sequence conflict" description="In Ref. 2; DW001381." evidence="6" ref="2">
    <original>R</original>
    <variation>K</variation>
    <location>
        <position position="559"/>
    </location>
</feature>
<feature type="sequence conflict" description="In Ref. 2; DW001381." evidence="6" ref="2">
    <original>H</original>
    <variation>Q</variation>
    <location>
        <position position="604"/>
    </location>
</feature>
<feature type="sequence conflict" description="In Ref. 2; DW001381." evidence="6" ref="2">
    <original>NSWSS</original>
    <variation>STWST</variation>
    <location>
        <begin position="635"/>
        <end position="639"/>
    </location>
</feature>
<dbReference type="EC" id="1.4.3.16" evidence="2"/>
<dbReference type="EMBL" id="DW001381">
    <property type="status" value="NOT_ANNOTATED_CDS"/>
    <property type="molecule type" value="mRNA"/>
</dbReference>
<dbReference type="RefSeq" id="XP_016489183.1">
    <property type="nucleotide sequence ID" value="XM_016633697.1"/>
</dbReference>
<dbReference type="SMR" id="A0A1S4BJT3"/>
<dbReference type="STRING" id="4097.A0A1S4BJT3"/>
<dbReference type="PaxDb" id="4097-A0A1S4BJT3"/>
<dbReference type="GeneID" id="107809102"/>
<dbReference type="KEGG" id="nta:107809102"/>
<dbReference type="OMA" id="MNDYVGI"/>
<dbReference type="OrthoDB" id="71672at2759"/>
<dbReference type="UniPathway" id="UPA00107"/>
<dbReference type="UniPathway" id="UPA00253">
    <property type="reaction ID" value="UER00326"/>
</dbReference>
<dbReference type="Proteomes" id="UP000084051">
    <property type="component" value="Unplaced"/>
</dbReference>
<dbReference type="GO" id="GO:0009507">
    <property type="term" value="C:chloroplast"/>
    <property type="evidence" value="ECO:0007669"/>
    <property type="project" value="UniProtKB-SubCell"/>
</dbReference>
<dbReference type="GO" id="GO:0008734">
    <property type="term" value="F:L-aspartate oxidase activity"/>
    <property type="evidence" value="ECO:0007669"/>
    <property type="project" value="UniProtKB-EC"/>
</dbReference>
<dbReference type="GO" id="GO:0009820">
    <property type="term" value="P:alkaloid metabolic process"/>
    <property type="evidence" value="ECO:0007669"/>
    <property type="project" value="UniProtKB-KW"/>
</dbReference>
<dbReference type="GO" id="GO:0009435">
    <property type="term" value="P:NAD biosynthetic process"/>
    <property type="evidence" value="ECO:0007669"/>
    <property type="project" value="UniProtKB-UniPathway"/>
</dbReference>
<dbReference type="GO" id="GO:0042179">
    <property type="term" value="P:nicotine biosynthetic process"/>
    <property type="evidence" value="ECO:0007669"/>
    <property type="project" value="UniProtKB-UniPathway"/>
</dbReference>
<dbReference type="FunFam" id="3.90.700.10:FF:000002">
    <property type="entry name" value="L-aspartate oxidase"/>
    <property type="match status" value="1"/>
</dbReference>
<dbReference type="Gene3D" id="3.50.50.60">
    <property type="entry name" value="FAD/NAD(P)-binding domain"/>
    <property type="match status" value="1"/>
</dbReference>
<dbReference type="Gene3D" id="1.20.58.100">
    <property type="entry name" value="Fumarate reductase/succinate dehydrogenase flavoprotein-like, C-terminal domain"/>
    <property type="match status" value="1"/>
</dbReference>
<dbReference type="Gene3D" id="3.90.700.10">
    <property type="entry name" value="Succinate dehydrogenase/fumarate reductase flavoprotein, catalytic domain"/>
    <property type="match status" value="1"/>
</dbReference>
<dbReference type="InterPro" id="IPR003953">
    <property type="entry name" value="FAD-dep_OxRdtase_2_FAD-bd"/>
</dbReference>
<dbReference type="InterPro" id="IPR036188">
    <property type="entry name" value="FAD/NAD-bd_sf"/>
</dbReference>
<dbReference type="InterPro" id="IPR037099">
    <property type="entry name" value="Fum_R/Succ_DH_flav-like_C_sf"/>
</dbReference>
<dbReference type="InterPro" id="IPR015939">
    <property type="entry name" value="Fum_Rdtase/Succ_DH_flav-like_C"/>
</dbReference>
<dbReference type="InterPro" id="IPR005288">
    <property type="entry name" value="NadB"/>
</dbReference>
<dbReference type="InterPro" id="IPR027477">
    <property type="entry name" value="Succ_DH/fumarate_Rdtase_cat_sf"/>
</dbReference>
<dbReference type="NCBIfam" id="TIGR00551">
    <property type="entry name" value="nadB"/>
    <property type="match status" value="1"/>
</dbReference>
<dbReference type="PANTHER" id="PTHR42716">
    <property type="entry name" value="L-ASPARTATE OXIDASE"/>
    <property type="match status" value="1"/>
</dbReference>
<dbReference type="PANTHER" id="PTHR42716:SF2">
    <property type="entry name" value="L-ASPARTATE OXIDASE, CHLOROPLASTIC"/>
    <property type="match status" value="1"/>
</dbReference>
<dbReference type="Pfam" id="PF00890">
    <property type="entry name" value="FAD_binding_2"/>
    <property type="match status" value="1"/>
</dbReference>
<dbReference type="Pfam" id="PF02910">
    <property type="entry name" value="Succ_DH_flav_C"/>
    <property type="match status" value="1"/>
</dbReference>
<dbReference type="PRINTS" id="PR00368">
    <property type="entry name" value="FADPNR"/>
</dbReference>
<dbReference type="SUPFAM" id="SSF51905">
    <property type="entry name" value="FAD/NAD(P)-binding domain"/>
    <property type="match status" value="1"/>
</dbReference>
<dbReference type="SUPFAM" id="SSF46977">
    <property type="entry name" value="Succinate dehydrogenase/fumarate reductase flavoprotein C-terminal domain"/>
    <property type="match status" value="1"/>
</dbReference>
<dbReference type="SUPFAM" id="SSF56425">
    <property type="entry name" value="Succinate dehydrogenase/fumarate reductase flavoprotein, catalytic domain"/>
    <property type="match status" value="1"/>
</dbReference>
<keyword id="KW-0017">Alkaloid metabolism</keyword>
<keyword id="KW-0150">Chloroplast</keyword>
<keyword id="KW-0274">FAD</keyword>
<keyword id="KW-0285">Flavoprotein</keyword>
<keyword id="KW-0560">Oxidoreductase</keyword>
<keyword id="KW-0934">Plastid</keyword>
<keyword id="KW-0662">Pyridine nucleotide biosynthesis</keyword>
<keyword id="KW-1185">Reference proteome</keyword>
<keyword id="KW-0809">Transit peptide</keyword>
<gene>
    <name evidence="5" type="primary">AO-2B</name>
    <name evidence="7" type="ORF">LOC107809102</name>
</gene>
<proteinExistence type="evidence at transcript level"/>
<organism>
    <name type="scientific">Nicotiana tabacum</name>
    <name type="common">Common tobacco</name>
    <dbReference type="NCBI Taxonomy" id="4097"/>
    <lineage>
        <taxon>Eukaryota</taxon>
        <taxon>Viridiplantae</taxon>
        <taxon>Streptophyta</taxon>
        <taxon>Embryophyta</taxon>
        <taxon>Tracheophyta</taxon>
        <taxon>Spermatophyta</taxon>
        <taxon>Magnoliopsida</taxon>
        <taxon>eudicotyledons</taxon>
        <taxon>Gunneridae</taxon>
        <taxon>Pentapetalae</taxon>
        <taxon>asterids</taxon>
        <taxon>lamiids</taxon>
        <taxon>Solanales</taxon>
        <taxon>Solanaceae</taxon>
        <taxon>Nicotianoideae</taxon>
        <taxon>Nicotianeae</taxon>
        <taxon>Nicotiana</taxon>
    </lineage>
</organism>
<sequence length="648" mass="71728">MATGIASGCGQLHLRKPVYLRNSYGNKAHCHSNVILNGTQNQIAWSSWVSNVLRVNRSSYPECQVIKTNWKSSRGTIKSCQQRDGSVTRYFDFTVIGSGIAGLRYALEVAKHGTVAVITKAEPHESSTNYAQGGVSAVLCPLDSVESHMQDTIVAGAYLCDKETVRVVCTEGPERIRELIAMGASFDHGEDGNLDLAREGGHSHRRIVHAADMTGREIERALLEAVFKNPNIHVFQHHFAIDLLTTQDGSDIVCHGVDTIHTETKEVIRFISKVTLLASGGVGHIYPSTTNPTVATGDGMAMAHRAQAVISNMEFVQFHPTALADEGLPNIPSARENAFLITEAVRGDGGILYNLDMERFMPMYDERAELAPRDVVARSIDDQLKKRGEKYVLLDISHKPREKVLSHFPNIAAECLRHGLDITQQPIPVVPAAHYMCGGVRAGLEGETNVQGLYVAGEVACTGLHGANRLASNSLLEALVFARRAVQPSIDHVNVSRIDHGASSWWPRPVAPMVLGDTVLNKVICRTREVRKELQSIMWEYVGIVRSNSRLNTAEKRIRELELEWETYLFQHGWEPTMVGVEACEMRNLFCCANLVVSSALSRHESRGLHYTTDFPHVEESERLPTVIFPSQRNNSWSSRQLHAQPIS</sequence>
<accession>A0A1S4BJT3</accession>